<gene>
    <name evidence="1" type="primary">tilS</name>
    <name type="ordered locus">BT9727_0058</name>
</gene>
<evidence type="ECO:0000255" key="1">
    <source>
        <dbReference type="HAMAP-Rule" id="MF_01161"/>
    </source>
</evidence>
<organism>
    <name type="scientific">Bacillus thuringiensis subsp. konkukian (strain 97-27)</name>
    <dbReference type="NCBI Taxonomy" id="281309"/>
    <lineage>
        <taxon>Bacteria</taxon>
        <taxon>Bacillati</taxon>
        <taxon>Bacillota</taxon>
        <taxon>Bacilli</taxon>
        <taxon>Bacillales</taxon>
        <taxon>Bacillaceae</taxon>
        <taxon>Bacillus</taxon>
        <taxon>Bacillus cereus group</taxon>
    </lineage>
</organism>
<dbReference type="EC" id="6.3.4.19" evidence="1"/>
<dbReference type="EMBL" id="AE017355">
    <property type="protein sequence ID" value="AAT58905.1"/>
    <property type="molecule type" value="Genomic_DNA"/>
</dbReference>
<dbReference type="RefSeq" id="WP_000655473.1">
    <property type="nucleotide sequence ID" value="NC_005957.1"/>
</dbReference>
<dbReference type="RefSeq" id="YP_034416.1">
    <property type="nucleotide sequence ID" value="NC_005957.1"/>
</dbReference>
<dbReference type="SMR" id="Q6HPV4"/>
<dbReference type="KEGG" id="btk:BT9727_0058"/>
<dbReference type="PATRIC" id="fig|281309.8.peg.60"/>
<dbReference type="HOGENOM" id="CLU_018869_0_1_9"/>
<dbReference type="Proteomes" id="UP000001301">
    <property type="component" value="Chromosome"/>
</dbReference>
<dbReference type="GO" id="GO:0005737">
    <property type="term" value="C:cytoplasm"/>
    <property type="evidence" value="ECO:0007669"/>
    <property type="project" value="UniProtKB-SubCell"/>
</dbReference>
<dbReference type="GO" id="GO:0005524">
    <property type="term" value="F:ATP binding"/>
    <property type="evidence" value="ECO:0007669"/>
    <property type="project" value="UniProtKB-UniRule"/>
</dbReference>
<dbReference type="GO" id="GO:0032267">
    <property type="term" value="F:tRNA(Ile)-lysidine synthase activity"/>
    <property type="evidence" value="ECO:0007669"/>
    <property type="project" value="UniProtKB-EC"/>
</dbReference>
<dbReference type="GO" id="GO:0006400">
    <property type="term" value="P:tRNA modification"/>
    <property type="evidence" value="ECO:0007669"/>
    <property type="project" value="UniProtKB-UniRule"/>
</dbReference>
<dbReference type="CDD" id="cd01992">
    <property type="entry name" value="TilS_N"/>
    <property type="match status" value="1"/>
</dbReference>
<dbReference type="Gene3D" id="3.30.465.60">
    <property type="match status" value="1"/>
</dbReference>
<dbReference type="Gene3D" id="3.40.50.620">
    <property type="entry name" value="HUPs"/>
    <property type="match status" value="1"/>
</dbReference>
<dbReference type="HAMAP" id="MF_01161">
    <property type="entry name" value="tRNA_Ile_lys_synt"/>
    <property type="match status" value="1"/>
</dbReference>
<dbReference type="InterPro" id="IPR012796">
    <property type="entry name" value="Lysidine-tRNA-synth_C"/>
</dbReference>
<dbReference type="InterPro" id="IPR014729">
    <property type="entry name" value="Rossmann-like_a/b/a_fold"/>
</dbReference>
<dbReference type="InterPro" id="IPR011063">
    <property type="entry name" value="TilS/TtcA_N"/>
</dbReference>
<dbReference type="InterPro" id="IPR012094">
    <property type="entry name" value="tRNA_Ile_lys_synt"/>
</dbReference>
<dbReference type="InterPro" id="IPR012795">
    <property type="entry name" value="tRNA_Ile_lys_synt_N"/>
</dbReference>
<dbReference type="InterPro" id="IPR015262">
    <property type="entry name" value="tRNA_Ile_lys_synt_subst-bd"/>
</dbReference>
<dbReference type="NCBIfam" id="TIGR02433">
    <property type="entry name" value="lysidine_TilS_C"/>
    <property type="match status" value="1"/>
</dbReference>
<dbReference type="NCBIfam" id="TIGR02432">
    <property type="entry name" value="lysidine_TilS_N"/>
    <property type="match status" value="1"/>
</dbReference>
<dbReference type="PANTHER" id="PTHR43033">
    <property type="entry name" value="TRNA(ILE)-LYSIDINE SYNTHASE-RELATED"/>
    <property type="match status" value="1"/>
</dbReference>
<dbReference type="PANTHER" id="PTHR43033:SF1">
    <property type="entry name" value="TRNA(ILE)-LYSIDINE SYNTHASE-RELATED"/>
    <property type="match status" value="1"/>
</dbReference>
<dbReference type="Pfam" id="PF01171">
    <property type="entry name" value="ATP_bind_3"/>
    <property type="match status" value="1"/>
</dbReference>
<dbReference type="Pfam" id="PF09179">
    <property type="entry name" value="TilS"/>
    <property type="match status" value="1"/>
</dbReference>
<dbReference type="Pfam" id="PF11734">
    <property type="entry name" value="TilS_C"/>
    <property type="match status" value="1"/>
</dbReference>
<dbReference type="SMART" id="SM00977">
    <property type="entry name" value="TilS_C"/>
    <property type="match status" value="1"/>
</dbReference>
<dbReference type="SUPFAM" id="SSF52402">
    <property type="entry name" value="Adenine nucleotide alpha hydrolases-like"/>
    <property type="match status" value="1"/>
</dbReference>
<dbReference type="SUPFAM" id="SSF82829">
    <property type="entry name" value="MesJ substrate recognition domain-like"/>
    <property type="match status" value="1"/>
</dbReference>
<dbReference type="SUPFAM" id="SSF56037">
    <property type="entry name" value="PheT/TilS domain"/>
    <property type="match status" value="1"/>
</dbReference>
<reference key="1">
    <citation type="journal article" date="2006" name="J. Bacteriol.">
        <title>Pathogenomic sequence analysis of Bacillus cereus and Bacillus thuringiensis isolates closely related to Bacillus anthracis.</title>
        <authorList>
            <person name="Han C.S."/>
            <person name="Xie G."/>
            <person name="Challacombe J.F."/>
            <person name="Altherr M.R."/>
            <person name="Bhotika S.S."/>
            <person name="Bruce D."/>
            <person name="Campbell C.S."/>
            <person name="Campbell M.L."/>
            <person name="Chen J."/>
            <person name="Chertkov O."/>
            <person name="Cleland C."/>
            <person name="Dimitrijevic M."/>
            <person name="Doggett N.A."/>
            <person name="Fawcett J.J."/>
            <person name="Glavina T."/>
            <person name="Goodwin L.A."/>
            <person name="Hill K.K."/>
            <person name="Hitchcock P."/>
            <person name="Jackson P.J."/>
            <person name="Keim P."/>
            <person name="Kewalramani A.R."/>
            <person name="Longmire J."/>
            <person name="Lucas S."/>
            <person name="Malfatti S."/>
            <person name="McMurry K."/>
            <person name="Meincke L.J."/>
            <person name="Misra M."/>
            <person name="Moseman B.L."/>
            <person name="Mundt M."/>
            <person name="Munk A.C."/>
            <person name="Okinaka R.T."/>
            <person name="Parson-Quintana B."/>
            <person name="Reilly L.P."/>
            <person name="Richardson P."/>
            <person name="Robinson D.L."/>
            <person name="Rubin E."/>
            <person name="Saunders E."/>
            <person name="Tapia R."/>
            <person name="Tesmer J.G."/>
            <person name="Thayer N."/>
            <person name="Thompson L.S."/>
            <person name="Tice H."/>
            <person name="Ticknor L.O."/>
            <person name="Wills P.L."/>
            <person name="Brettin T.S."/>
            <person name="Gilna P."/>
        </authorList>
    </citation>
    <scope>NUCLEOTIDE SEQUENCE [LARGE SCALE GENOMIC DNA]</scope>
    <source>
        <strain>97-27</strain>
    </source>
</reference>
<accession>Q6HPV4</accession>
<proteinExistence type="inferred from homology"/>
<name>TILS_BACHK</name>
<feature type="chain" id="PRO_0000181647" description="tRNA(Ile)-lysidine synthase">
    <location>
        <begin position="1"/>
        <end position="476"/>
    </location>
</feature>
<feature type="binding site" evidence="1">
    <location>
        <begin position="30"/>
        <end position="35"/>
    </location>
    <ligand>
        <name>ATP</name>
        <dbReference type="ChEBI" id="CHEBI:30616"/>
    </ligand>
</feature>
<sequence>MKDTFVEKVDDFVRQHDVLKERSTIVVGVSGGPDSLALLYYLLEKRAAKQFEIVVAHVDHMFRGDESHEDLQFVQDLCKGLGVICETIRINVSQYQKQYGMNAQVAARECRYAFLERIMKKYDARYVALGHHGDDQVETILMRLVRGSTPKGYAGIAVKRPFHNGYLIRPLLGVTKEEIVNYCNELKIIPRIDPSNKKEVYTRNRLRKYVLPHLKEENPQVHEKFQKFSMQMQEDEAYLQELAFEKMNKVITKKSDKQISLSIPAFESMSMPLQRRGIQLILNYLYEYKIPSSLSSIHIDKVIEFFKRTQPSGSLDFPGDLKIVRAYEECSFGFKQEIVSPFLQDLSVPGTITLSNGDKLVTEVSEDIPSDMNETVFVAKYNDISYPIRIRSRENGDRMSIQGMNGTKKIKAIFIEAKVPREKREEWPVVCDASGNIIWLPLLKRSAFAISKETAKKDKYMIIHYKSKESSGRIMK</sequence>
<keyword id="KW-0067">ATP-binding</keyword>
<keyword id="KW-0963">Cytoplasm</keyword>
<keyword id="KW-0436">Ligase</keyword>
<keyword id="KW-0547">Nucleotide-binding</keyword>
<keyword id="KW-0819">tRNA processing</keyword>
<protein>
    <recommendedName>
        <fullName evidence="1">tRNA(Ile)-lysidine synthase</fullName>
        <ecNumber evidence="1">6.3.4.19</ecNumber>
    </recommendedName>
    <alternativeName>
        <fullName evidence="1">tRNA(Ile)-2-lysyl-cytidine synthase</fullName>
    </alternativeName>
    <alternativeName>
        <fullName evidence="1">tRNA(Ile)-lysidine synthetase</fullName>
    </alternativeName>
</protein>
<comment type="function">
    <text evidence="1">Ligates lysine onto the cytidine present at position 34 of the AUA codon-specific tRNA(Ile) that contains the anticodon CAU, in an ATP-dependent manner. Cytidine is converted to lysidine, thus changing the amino acid specificity of the tRNA from methionine to isoleucine.</text>
</comment>
<comment type="catalytic activity">
    <reaction evidence="1">
        <text>cytidine(34) in tRNA(Ile2) + L-lysine + ATP = lysidine(34) in tRNA(Ile2) + AMP + diphosphate + H(+)</text>
        <dbReference type="Rhea" id="RHEA:43744"/>
        <dbReference type="Rhea" id="RHEA-COMP:10625"/>
        <dbReference type="Rhea" id="RHEA-COMP:10670"/>
        <dbReference type="ChEBI" id="CHEBI:15378"/>
        <dbReference type="ChEBI" id="CHEBI:30616"/>
        <dbReference type="ChEBI" id="CHEBI:32551"/>
        <dbReference type="ChEBI" id="CHEBI:33019"/>
        <dbReference type="ChEBI" id="CHEBI:82748"/>
        <dbReference type="ChEBI" id="CHEBI:83665"/>
        <dbReference type="ChEBI" id="CHEBI:456215"/>
        <dbReference type="EC" id="6.3.4.19"/>
    </reaction>
</comment>
<comment type="subcellular location">
    <subcellularLocation>
        <location evidence="1">Cytoplasm</location>
    </subcellularLocation>
</comment>
<comment type="domain">
    <text>The N-terminal region contains the highly conserved SGGXDS motif, predicted to be a P-loop motif involved in ATP binding.</text>
</comment>
<comment type="similarity">
    <text evidence="1">Belongs to the tRNA(Ile)-lysidine synthase family.</text>
</comment>